<sequence>MPVEVKICGITDEDAMDVAIEEGADYVGLVFFPPSPRNVTPDRAAELVEFAPGDVTKVGLFVDPDDATLDTVLTRVRLDLLQLHGHETPERVEAIRLEYGLPVMKVLSVSDAADLDAAEPYLAVADRLLFDAKPPKGAVLPGGNAVSFDWSILTGRKWGLPWMLAGGLTPANVAEAVRISGAAAVDVSSGVESAPGIKDSDKIRAFIKAARGGRP</sequence>
<comment type="catalytic activity">
    <reaction evidence="1">
        <text>N-(5-phospho-beta-D-ribosyl)anthranilate = 1-(2-carboxyphenylamino)-1-deoxy-D-ribulose 5-phosphate</text>
        <dbReference type="Rhea" id="RHEA:21540"/>
        <dbReference type="ChEBI" id="CHEBI:18277"/>
        <dbReference type="ChEBI" id="CHEBI:58613"/>
        <dbReference type="EC" id="5.3.1.24"/>
    </reaction>
</comment>
<comment type="pathway">
    <text evidence="1">Amino-acid biosynthesis; L-tryptophan biosynthesis; L-tryptophan from chorismate: step 3/5.</text>
</comment>
<comment type="similarity">
    <text evidence="1">Belongs to the TrpF family.</text>
</comment>
<reference key="1">
    <citation type="journal article" date="2005" name="DNA Res.">
        <title>Complete genome sequence of the facultative anaerobic magnetotactic bacterium Magnetospirillum sp. strain AMB-1.</title>
        <authorList>
            <person name="Matsunaga T."/>
            <person name="Okamura Y."/>
            <person name="Fukuda Y."/>
            <person name="Wahyudi A.T."/>
            <person name="Murase Y."/>
            <person name="Takeyama H."/>
        </authorList>
    </citation>
    <scope>NUCLEOTIDE SEQUENCE [LARGE SCALE GENOMIC DNA]</scope>
    <source>
        <strain>ATCC 700264 / AMB-1</strain>
    </source>
</reference>
<feature type="chain" id="PRO_1000018606" description="N-(5'-phosphoribosyl)anthranilate isomerase">
    <location>
        <begin position="1"/>
        <end position="215"/>
    </location>
</feature>
<protein>
    <recommendedName>
        <fullName evidence="1">N-(5'-phosphoribosyl)anthranilate isomerase</fullName>
        <shortName evidence="1">PRAI</shortName>
        <ecNumber evidence="1">5.3.1.24</ecNumber>
    </recommendedName>
</protein>
<evidence type="ECO:0000255" key="1">
    <source>
        <dbReference type="HAMAP-Rule" id="MF_00135"/>
    </source>
</evidence>
<gene>
    <name evidence="1" type="primary">trpF</name>
    <name type="ordered locus">amb4001</name>
</gene>
<accession>Q2W020</accession>
<keyword id="KW-0028">Amino-acid biosynthesis</keyword>
<keyword id="KW-0057">Aromatic amino acid biosynthesis</keyword>
<keyword id="KW-0413">Isomerase</keyword>
<keyword id="KW-0822">Tryptophan biosynthesis</keyword>
<proteinExistence type="inferred from homology"/>
<name>TRPF_PARM1</name>
<dbReference type="EC" id="5.3.1.24" evidence="1"/>
<dbReference type="EMBL" id="AP007255">
    <property type="protein sequence ID" value="BAE52805.1"/>
    <property type="molecule type" value="Genomic_DNA"/>
</dbReference>
<dbReference type="RefSeq" id="WP_011386354.1">
    <property type="nucleotide sequence ID" value="NC_007626.1"/>
</dbReference>
<dbReference type="SMR" id="Q2W020"/>
<dbReference type="STRING" id="342108.amb4001"/>
<dbReference type="KEGG" id="mag:amb4001"/>
<dbReference type="HOGENOM" id="CLU_076364_1_1_5"/>
<dbReference type="OrthoDB" id="9796196at2"/>
<dbReference type="UniPathway" id="UPA00035">
    <property type="reaction ID" value="UER00042"/>
</dbReference>
<dbReference type="Proteomes" id="UP000007058">
    <property type="component" value="Chromosome"/>
</dbReference>
<dbReference type="GO" id="GO:0004640">
    <property type="term" value="F:phosphoribosylanthranilate isomerase activity"/>
    <property type="evidence" value="ECO:0007669"/>
    <property type="project" value="UniProtKB-UniRule"/>
</dbReference>
<dbReference type="GO" id="GO:0000162">
    <property type="term" value="P:L-tryptophan biosynthetic process"/>
    <property type="evidence" value="ECO:0007669"/>
    <property type="project" value="UniProtKB-UniRule"/>
</dbReference>
<dbReference type="CDD" id="cd00405">
    <property type="entry name" value="PRAI"/>
    <property type="match status" value="1"/>
</dbReference>
<dbReference type="Gene3D" id="3.20.20.70">
    <property type="entry name" value="Aldolase class I"/>
    <property type="match status" value="1"/>
</dbReference>
<dbReference type="HAMAP" id="MF_00135">
    <property type="entry name" value="PRAI"/>
    <property type="match status" value="1"/>
</dbReference>
<dbReference type="InterPro" id="IPR013785">
    <property type="entry name" value="Aldolase_TIM"/>
</dbReference>
<dbReference type="InterPro" id="IPR001240">
    <property type="entry name" value="PRAI_dom"/>
</dbReference>
<dbReference type="InterPro" id="IPR011060">
    <property type="entry name" value="RibuloseP-bd_barrel"/>
</dbReference>
<dbReference type="InterPro" id="IPR044643">
    <property type="entry name" value="TrpF_fam"/>
</dbReference>
<dbReference type="NCBIfam" id="NF002295">
    <property type="entry name" value="PRK01222.1-1"/>
    <property type="match status" value="1"/>
</dbReference>
<dbReference type="PANTHER" id="PTHR42894">
    <property type="entry name" value="N-(5'-PHOSPHORIBOSYL)ANTHRANILATE ISOMERASE"/>
    <property type="match status" value="1"/>
</dbReference>
<dbReference type="PANTHER" id="PTHR42894:SF1">
    <property type="entry name" value="N-(5'-PHOSPHORIBOSYL)ANTHRANILATE ISOMERASE"/>
    <property type="match status" value="1"/>
</dbReference>
<dbReference type="Pfam" id="PF00697">
    <property type="entry name" value="PRAI"/>
    <property type="match status" value="1"/>
</dbReference>
<dbReference type="SUPFAM" id="SSF51366">
    <property type="entry name" value="Ribulose-phoshate binding barrel"/>
    <property type="match status" value="1"/>
</dbReference>
<organism>
    <name type="scientific">Paramagnetospirillum magneticum (strain ATCC 700264 / AMB-1)</name>
    <name type="common">Magnetospirillum magneticum</name>
    <dbReference type="NCBI Taxonomy" id="342108"/>
    <lineage>
        <taxon>Bacteria</taxon>
        <taxon>Pseudomonadati</taxon>
        <taxon>Pseudomonadota</taxon>
        <taxon>Alphaproteobacteria</taxon>
        <taxon>Rhodospirillales</taxon>
        <taxon>Magnetospirillaceae</taxon>
        <taxon>Paramagnetospirillum</taxon>
    </lineage>
</organism>